<accession>Q313H2</accession>
<name>DXR_OLEA2</name>
<organism>
    <name type="scientific">Oleidesulfovibrio alaskensis (strain ATCC BAA-1058 / DSM 17464 / G20)</name>
    <name type="common">Desulfovibrio alaskensis</name>
    <dbReference type="NCBI Taxonomy" id="207559"/>
    <lineage>
        <taxon>Bacteria</taxon>
        <taxon>Pseudomonadati</taxon>
        <taxon>Thermodesulfobacteriota</taxon>
        <taxon>Desulfovibrionia</taxon>
        <taxon>Desulfovibrionales</taxon>
        <taxon>Desulfovibrionaceae</taxon>
        <taxon>Oleidesulfovibrio</taxon>
    </lineage>
</organism>
<evidence type="ECO:0000255" key="1">
    <source>
        <dbReference type="HAMAP-Rule" id="MF_00183"/>
    </source>
</evidence>
<proteinExistence type="inferred from homology"/>
<feature type="chain" id="PRO_1000020255" description="1-deoxy-D-xylulose 5-phosphate reductoisomerase">
    <location>
        <begin position="1"/>
        <end position="407"/>
    </location>
</feature>
<feature type="binding site" evidence="1">
    <location>
        <position position="27"/>
    </location>
    <ligand>
        <name>NADPH</name>
        <dbReference type="ChEBI" id="CHEBI:57783"/>
    </ligand>
</feature>
<feature type="binding site" evidence="1">
    <location>
        <position position="28"/>
    </location>
    <ligand>
        <name>NADPH</name>
        <dbReference type="ChEBI" id="CHEBI:57783"/>
    </ligand>
</feature>
<feature type="binding site" evidence="1">
    <location>
        <position position="29"/>
    </location>
    <ligand>
        <name>NADPH</name>
        <dbReference type="ChEBI" id="CHEBI:57783"/>
    </ligand>
</feature>
<feature type="binding site" evidence="1">
    <location>
        <position position="30"/>
    </location>
    <ligand>
        <name>NADPH</name>
        <dbReference type="ChEBI" id="CHEBI:57783"/>
    </ligand>
</feature>
<feature type="binding site" evidence="1">
    <location>
        <position position="53"/>
    </location>
    <ligand>
        <name>NADPH</name>
        <dbReference type="ChEBI" id="CHEBI:57783"/>
    </ligand>
</feature>
<feature type="binding site" evidence="1">
    <location>
        <position position="54"/>
    </location>
    <ligand>
        <name>NADPH</name>
        <dbReference type="ChEBI" id="CHEBI:57783"/>
    </ligand>
</feature>
<feature type="binding site" evidence="1">
    <location>
        <position position="55"/>
    </location>
    <ligand>
        <name>NADPH</name>
        <dbReference type="ChEBI" id="CHEBI:57783"/>
    </ligand>
</feature>
<feature type="binding site" evidence="1">
    <location>
        <position position="140"/>
    </location>
    <ligand>
        <name>NADPH</name>
        <dbReference type="ChEBI" id="CHEBI:57783"/>
    </ligand>
</feature>
<feature type="binding site" evidence="1">
    <location>
        <position position="141"/>
    </location>
    <ligand>
        <name>1-deoxy-D-xylulose 5-phosphate</name>
        <dbReference type="ChEBI" id="CHEBI:57792"/>
    </ligand>
</feature>
<feature type="binding site" evidence="1">
    <location>
        <position position="142"/>
    </location>
    <ligand>
        <name>NADPH</name>
        <dbReference type="ChEBI" id="CHEBI:57783"/>
    </ligand>
</feature>
<feature type="binding site" evidence="1">
    <location>
        <position position="166"/>
    </location>
    <ligand>
        <name>Mn(2+)</name>
        <dbReference type="ChEBI" id="CHEBI:29035"/>
    </ligand>
</feature>
<feature type="binding site" evidence="1">
    <location>
        <position position="167"/>
    </location>
    <ligand>
        <name>1-deoxy-D-xylulose 5-phosphate</name>
        <dbReference type="ChEBI" id="CHEBI:57792"/>
    </ligand>
</feature>
<feature type="binding site" evidence="1">
    <location>
        <position position="168"/>
    </location>
    <ligand>
        <name>1-deoxy-D-xylulose 5-phosphate</name>
        <dbReference type="ChEBI" id="CHEBI:57792"/>
    </ligand>
</feature>
<feature type="binding site" evidence="1">
    <location>
        <position position="168"/>
    </location>
    <ligand>
        <name>Mn(2+)</name>
        <dbReference type="ChEBI" id="CHEBI:29035"/>
    </ligand>
</feature>
<feature type="binding site" evidence="1">
    <location>
        <position position="192"/>
    </location>
    <ligand>
        <name>1-deoxy-D-xylulose 5-phosphate</name>
        <dbReference type="ChEBI" id="CHEBI:57792"/>
    </ligand>
</feature>
<feature type="binding site" evidence="1">
    <location>
        <position position="215"/>
    </location>
    <ligand>
        <name>1-deoxy-D-xylulose 5-phosphate</name>
        <dbReference type="ChEBI" id="CHEBI:57792"/>
    </ligand>
</feature>
<feature type="binding site" evidence="1">
    <location>
        <position position="221"/>
    </location>
    <ligand>
        <name>NADPH</name>
        <dbReference type="ChEBI" id="CHEBI:57783"/>
    </ligand>
</feature>
<feature type="binding site" evidence="1">
    <location>
        <position position="228"/>
    </location>
    <ligand>
        <name>1-deoxy-D-xylulose 5-phosphate</name>
        <dbReference type="ChEBI" id="CHEBI:57792"/>
    </ligand>
</feature>
<feature type="binding site" evidence="1">
    <location>
        <position position="233"/>
    </location>
    <ligand>
        <name>1-deoxy-D-xylulose 5-phosphate</name>
        <dbReference type="ChEBI" id="CHEBI:57792"/>
    </ligand>
</feature>
<feature type="binding site" evidence="1">
    <location>
        <position position="234"/>
    </location>
    <ligand>
        <name>1-deoxy-D-xylulose 5-phosphate</name>
        <dbReference type="ChEBI" id="CHEBI:57792"/>
    </ligand>
</feature>
<feature type="binding site" evidence="1">
    <location>
        <position position="237"/>
    </location>
    <ligand>
        <name>1-deoxy-D-xylulose 5-phosphate</name>
        <dbReference type="ChEBI" id="CHEBI:57792"/>
    </ligand>
</feature>
<feature type="binding site" evidence="1">
    <location>
        <position position="237"/>
    </location>
    <ligand>
        <name>Mn(2+)</name>
        <dbReference type="ChEBI" id="CHEBI:29035"/>
    </ligand>
</feature>
<dbReference type="EC" id="1.1.1.267" evidence="1"/>
<dbReference type="EMBL" id="CP000112">
    <property type="protein sequence ID" value="ABB37924.1"/>
    <property type="molecule type" value="Genomic_DNA"/>
</dbReference>
<dbReference type="RefSeq" id="WP_011367151.1">
    <property type="nucleotide sequence ID" value="NC_007519.1"/>
</dbReference>
<dbReference type="SMR" id="Q313H2"/>
<dbReference type="STRING" id="207559.Dde_1123"/>
<dbReference type="KEGG" id="dde:Dde_1123"/>
<dbReference type="eggNOG" id="COG0743">
    <property type="taxonomic scope" value="Bacteria"/>
</dbReference>
<dbReference type="HOGENOM" id="CLU_035714_4_0_7"/>
<dbReference type="UniPathway" id="UPA00056">
    <property type="reaction ID" value="UER00092"/>
</dbReference>
<dbReference type="Proteomes" id="UP000002710">
    <property type="component" value="Chromosome"/>
</dbReference>
<dbReference type="GO" id="GO:0030604">
    <property type="term" value="F:1-deoxy-D-xylulose-5-phosphate reductoisomerase activity"/>
    <property type="evidence" value="ECO:0007669"/>
    <property type="project" value="UniProtKB-UniRule"/>
</dbReference>
<dbReference type="GO" id="GO:0030145">
    <property type="term" value="F:manganese ion binding"/>
    <property type="evidence" value="ECO:0007669"/>
    <property type="project" value="TreeGrafter"/>
</dbReference>
<dbReference type="GO" id="GO:0070402">
    <property type="term" value="F:NADPH binding"/>
    <property type="evidence" value="ECO:0007669"/>
    <property type="project" value="InterPro"/>
</dbReference>
<dbReference type="GO" id="GO:0051484">
    <property type="term" value="P:isopentenyl diphosphate biosynthetic process, methylerythritol 4-phosphate pathway involved in terpenoid biosynthetic process"/>
    <property type="evidence" value="ECO:0007669"/>
    <property type="project" value="TreeGrafter"/>
</dbReference>
<dbReference type="FunFam" id="3.40.50.720:FF:000045">
    <property type="entry name" value="1-deoxy-D-xylulose 5-phosphate reductoisomerase"/>
    <property type="match status" value="1"/>
</dbReference>
<dbReference type="Gene3D" id="1.10.1740.10">
    <property type="match status" value="1"/>
</dbReference>
<dbReference type="Gene3D" id="3.40.50.720">
    <property type="entry name" value="NAD(P)-binding Rossmann-like Domain"/>
    <property type="match status" value="1"/>
</dbReference>
<dbReference type="HAMAP" id="MF_00183">
    <property type="entry name" value="DXP_reductoisom"/>
    <property type="match status" value="1"/>
</dbReference>
<dbReference type="InterPro" id="IPR003821">
    <property type="entry name" value="DXP_reductoisomerase"/>
</dbReference>
<dbReference type="InterPro" id="IPR013644">
    <property type="entry name" value="DXP_reductoisomerase_C"/>
</dbReference>
<dbReference type="InterPro" id="IPR013512">
    <property type="entry name" value="DXP_reductoisomerase_N"/>
</dbReference>
<dbReference type="InterPro" id="IPR026877">
    <property type="entry name" value="DXPR_C"/>
</dbReference>
<dbReference type="InterPro" id="IPR036169">
    <property type="entry name" value="DXPR_C_sf"/>
</dbReference>
<dbReference type="InterPro" id="IPR036291">
    <property type="entry name" value="NAD(P)-bd_dom_sf"/>
</dbReference>
<dbReference type="NCBIfam" id="TIGR00243">
    <property type="entry name" value="Dxr"/>
    <property type="match status" value="1"/>
</dbReference>
<dbReference type="PANTHER" id="PTHR30525">
    <property type="entry name" value="1-DEOXY-D-XYLULOSE 5-PHOSPHATE REDUCTOISOMERASE"/>
    <property type="match status" value="1"/>
</dbReference>
<dbReference type="PANTHER" id="PTHR30525:SF0">
    <property type="entry name" value="1-DEOXY-D-XYLULOSE 5-PHOSPHATE REDUCTOISOMERASE, CHLOROPLASTIC"/>
    <property type="match status" value="1"/>
</dbReference>
<dbReference type="Pfam" id="PF08436">
    <property type="entry name" value="DXP_redisom_C"/>
    <property type="match status" value="1"/>
</dbReference>
<dbReference type="Pfam" id="PF02670">
    <property type="entry name" value="DXP_reductoisom"/>
    <property type="match status" value="1"/>
</dbReference>
<dbReference type="Pfam" id="PF13288">
    <property type="entry name" value="DXPR_C"/>
    <property type="match status" value="1"/>
</dbReference>
<dbReference type="PIRSF" id="PIRSF006205">
    <property type="entry name" value="Dxp_reductismrs"/>
    <property type="match status" value="1"/>
</dbReference>
<dbReference type="SUPFAM" id="SSF69055">
    <property type="entry name" value="1-deoxy-D-xylulose-5-phosphate reductoisomerase, C-terminal domain"/>
    <property type="match status" value="1"/>
</dbReference>
<dbReference type="SUPFAM" id="SSF55347">
    <property type="entry name" value="Glyceraldehyde-3-phosphate dehydrogenase-like, C-terminal domain"/>
    <property type="match status" value="1"/>
</dbReference>
<dbReference type="SUPFAM" id="SSF51735">
    <property type="entry name" value="NAD(P)-binding Rossmann-fold domains"/>
    <property type="match status" value="1"/>
</dbReference>
<gene>
    <name evidence="1" type="primary">dxr</name>
    <name type="ordered locus">Dde_1123</name>
</gene>
<reference key="1">
    <citation type="journal article" date="2011" name="J. Bacteriol.">
        <title>Complete genome sequence and updated annotation of Desulfovibrio alaskensis G20.</title>
        <authorList>
            <person name="Hauser L.J."/>
            <person name="Land M.L."/>
            <person name="Brown S.D."/>
            <person name="Larimer F."/>
            <person name="Keller K.L."/>
            <person name="Rapp-Giles B.J."/>
            <person name="Price M.N."/>
            <person name="Lin M."/>
            <person name="Bruce D.C."/>
            <person name="Detter J.C."/>
            <person name="Tapia R."/>
            <person name="Han C.S."/>
            <person name="Goodwin L.A."/>
            <person name="Cheng J.F."/>
            <person name="Pitluck S."/>
            <person name="Copeland A."/>
            <person name="Lucas S."/>
            <person name="Nolan M."/>
            <person name="Lapidus A.L."/>
            <person name="Palumbo A.V."/>
            <person name="Wall J.D."/>
        </authorList>
    </citation>
    <scope>NUCLEOTIDE SEQUENCE [LARGE SCALE GENOMIC DNA]</scope>
    <source>
        <strain>ATCC BAA-1058 / DSM 17464 / G20</strain>
    </source>
</reference>
<keyword id="KW-0414">Isoprene biosynthesis</keyword>
<keyword id="KW-0464">Manganese</keyword>
<keyword id="KW-0479">Metal-binding</keyword>
<keyword id="KW-0521">NADP</keyword>
<keyword id="KW-0560">Oxidoreductase</keyword>
<keyword id="KW-1185">Reference proteome</keyword>
<protein>
    <recommendedName>
        <fullName evidence="1">1-deoxy-D-xylulose 5-phosphate reductoisomerase</fullName>
        <shortName evidence="1">DXP reductoisomerase</shortName>
        <ecNumber evidence="1">1.1.1.267</ecNumber>
    </recommendedName>
    <alternativeName>
        <fullName evidence="1">1-deoxyxylulose-5-phosphate reductoisomerase</fullName>
    </alternativeName>
    <alternativeName>
        <fullName evidence="1">2-C-methyl-D-erythritol 4-phosphate synthase</fullName>
    </alternativeName>
</protein>
<comment type="function">
    <text evidence="1">Catalyzes the NADPH-dependent rearrangement and reduction of 1-deoxy-D-xylulose-5-phosphate (DXP) to 2-C-methyl-D-erythritol 4-phosphate (MEP).</text>
</comment>
<comment type="catalytic activity">
    <reaction evidence="1">
        <text>2-C-methyl-D-erythritol 4-phosphate + NADP(+) = 1-deoxy-D-xylulose 5-phosphate + NADPH + H(+)</text>
        <dbReference type="Rhea" id="RHEA:13717"/>
        <dbReference type="ChEBI" id="CHEBI:15378"/>
        <dbReference type="ChEBI" id="CHEBI:57783"/>
        <dbReference type="ChEBI" id="CHEBI:57792"/>
        <dbReference type="ChEBI" id="CHEBI:58262"/>
        <dbReference type="ChEBI" id="CHEBI:58349"/>
        <dbReference type="EC" id="1.1.1.267"/>
    </reaction>
    <physiologicalReaction direction="right-to-left" evidence="1">
        <dbReference type="Rhea" id="RHEA:13719"/>
    </physiologicalReaction>
</comment>
<comment type="cofactor">
    <cofactor evidence="1">
        <name>Mg(2+)</name>
        <dbReference type="ChEBI" id="CHEBI:18420"/>
    </cofactor>
    <cofactor evidence="1">
        <name>Mn(2+)</name>
        <dbReference type="ChEBI" id="CHEBI:29035"/>
    </cofactor>
</comment>
<comment type="pathway">
    <text evidence="1">Isoprenoid biosynthesis; isopentenyl diphosphate biosynthesis via DXP pathway; isopentenyl diphosphate from 1-deoxy-D-xylulose 5-phosphate: step 1/6.</text>
</comment>
<comment type="similarity">
    <text evidence="1">Belongs to the DXR family.</text>
</comment>
<sequence length="407" mass="43573">MNGYISPLPDAAWNSRFPRSLVLLGSTGSIGTSALRVVERQPELFRITALAGARNVRLLARQAAAYRPPHLAVINGNAADELASLLPAGYRPRIHTGQEGYEFLAALPEADCVLSAQVGAAGLRATVAAARAGKTIALANKESLVLAGGLIRRLCHETGASVLPVDSEHNAIFQALQGHDAAQMRRIILTASGGPFRGRDRTFLQSVTREQALNHPNWSMGAKISIDSATLMNKGLEVIEACHLYNAPLEKVEVVVHPQSIIHSLVEYNDGSQIAHMGTPDMRIAIAYCLGWPRVMHTGVEPLDLLSVGSLTFESPDISLFPCLELARKAYAGGNGLPVVLNAANEVAVDLFLQGAIAFLDIPRLIEAAMQAHDAAPHQNMYDEVESILTLDKTTRRVTADLAGARG</sequence>